<name>RS27A_THEKO</name>
<proteinExistence type="inferred from homology"/>
<evidence type="ECO:0000255" key="1">
    <source>
        <dbReference type="HAMAP-Rule" id="MF_00777"/>
    </source>
</evidence>
<evidence type="ECO:0000305" key="2"/>
<reference key="1">
    <citation type="journal article" date="2005" name="Genome Res.">
        <title>Complete genome sequence of the hyperthermophilic archaeon Thermococcus kodakaraensis KOD1 and comparison with Pyrococcus genomes.</title>
        <authorList>
            <person name="Fukui T."/>
            <person name="Atomi H."/>
            <person name="Kanai T."/>
            <person name="Matsumi R."/>
            <person name="Fujiwara S."/>
            <person name="Imanaka T."/>
        </authorList>
    </citation>
    <scope>NUCLEOTIDE SEQUENCE [LARGE SCALE GENOMIC DNA]</scope>
    <source>
        <strain>ATCC BAA-918 / JCM 12380 / KOD1</strain>
    </source>
</reference>
<sequence>MAKGKKKTSQKWKLYEVKGGKVVRKNKFCPRCGPGVFMANHKDRWSCGRCGYTEWKK</sequence>
<protein>
    <recommendedName>
        <fullName evidence="1">Small ribosomal subunit protein eS31</fullName>
    </recommendedName>
    <alternativeName>
        <fullName evidence="2">30S ribosomal protein S27ae</fullName>
    </alternativeName>
</protein>
<accession>Q5JIY9</accession>
<keyword id="KW-0479">Metal-binding</keyword>
<keyword id="KW-1185">Reference proteome</keyword>
<keyword id="KW-0687">Ribonucleoprotein</keyword>
<keyword id="KW-0689">Ribosomal protein</keyword>
<keyword id="KW-0862">Zinc</keyword>
<keyword id="KW-0863">Zinc-finger</keyword>
<comment type="cofactor">
    <cofactor evidence="1">
        <name>Zn(2+)</name>
        <dbReference type="ChEBI" id="CHEBI:29105"/>
    </cofactor>
    <text evidence="1">Binds 1 zinc ion per subunit.</text>
</comment>
<comment type="subunit">
    <text evidence="1">Part of the 30S ribosomal subunit.</text>
</comment>
<comment type="similarity">
    <text evidence="1">Belongs to the eukaryotic ribosomal protein eS31 family.</text>
</comment>
<organism>
    <name type="scientific">Thermococcus kodakarensis (strain ATCC BAA-918 / JCM 12380 / KOD1)</name>
    <name type="common">Pyrococcus kodakaraensis (strain KOD1)</name>
    <dbReference type="NCBI Taxonomy" id="69014"/>
    <lineage>
        <taxon>Archaea</taxon>
        <taxon>Methanobacteriati</taxon>
        <taxon>Methanobacteriota</taxon>
        <taxon>Thermococci</taxon>
        <taxon>Thermococcales</taxon>
        <taxon>Thermococcaceae</taxon>
        <taxon>Thermococcus</taxon>
    </lineage>
</organism>
<dbReference type="EMBL" id="AP006878">
    <property type="protein sequence ID" value="BAD85884.1"/>
    <property type="molecule type" value="Genomic_DNA"/>
</dbReference>
<dbReference type="RefSeq" id="WP_011250646.1">
    <property type="nucleotide sequence ID" value="NC_006624.1"/>
</dbReference>
<dbReference type="SMR" id="Q5JIY9"/>
<dbReference type="FunCoup" id="Q5JIY9">
    <property type="interactions" value="61"/>
</dbReference>
<dbReference type="STRING" id="69014.TK1695"/>
<dbReference type="EnsemblBacteria" id="BAD85884">
    <property type="protein sequence ID" value="BAD85884"/>
    <property type="gene ID" value="TK1695"/>
</dbReference>
<dbReference type="GeneID" id="34861451"/>
<dbReference type="KEGG" id="tko:TK1695"/>
<dbReference type="PATRIC" id="fig|69014.16.peg.1653"/>
<dbReference type="eggNOG" id="arCOG04183">
    <property type="taxonomic scope" value="Archaea"/>
</dbReference>
<dbReference type="HOGENOM" id="CLU_179743_2_0_2"/>
<dbReference type="InParanoid" id="Q5JIY9"/>
<dbReference type="OrthoDB" id="25142at2157"/>
<dbReference type="PhylomeDB" id="Q5JIY9"/>
<dbReference type="Proteomes" id="UP000000536">
    <property type="component" value="Chromosome"/>
</dbReference>
<dbReference type="GO" id="GO:1990904">
    <property type="term" value="C:ribonucleoprotein complex"/>
    <property type="evidence" value="ECO:0007669"/>
    <property type="project" value="UniProtKB-KW"/>
</dbReference>
<dbReference type="GO" id="GO:0005840">
    <property type="term" value="C:ribosome"/>
    <property type="evidence" value="ECO:0007669"/>
    <property type="project" value="UniProtKB-KW"/>
</dbReference>
<dbReference type="GO" id="GO:0003735">
    <property type="term" value="F:structural constituent of ribosome"/>
    <property type="evidence" value="ECO:0007669"/>
    <property type="project" value="InterPro"/>
</dbReference>
<dbReference type="GO" id="GO:0008270">
    <property type="term" value="F:zinc ion binding"/>
    <property type="evidence" value="ECO:0007669"/>
    <property type="project" value="UniProtKB-UniRule"/>
</dbReference>
<dbReference type="GO" id="GO:0006412">
    <property type="term" value="P:translation"/>
    <property type="evidence" value="ECO:0007669"/>
    <property type="project" value="UniProtKB-UniRule"/>
</dbReference>
<dbReference type="Gene3D" id="6.20.50.150">
    <property type="match status" value="1"/>
</dbReference>
<dbReference type="HAMAP" id="MF_00777">
    <property type="entry name" value="Ribosomal_eS31"/>
    <property type="match status" value="1"/>
</dbReference>
<dbReference type="InterPro" id="IPR002906">
    <property type="entry name" value="Ribosomal_eS31"/>
</dbReference>
<dbReference type="InterPro" id="IPR022845">
    <property type="entry name" value="Ribosomal_eS31_arc"/>
</dbReference>
<dbReference type="InterPro" id="IPR038582">
    <property type="entry name" value="Ribosomal_eS31_euk-type_sf"/>
</dbReference>
<dbReference type="InterPro" id="IPR011332">
    <property type="entry name" value="Ribosomal_zn-bd"/>
</dbReference>
<dbReference type="NCBIfam" id="NF001669">
    <property type="entry name" value="PRK00432.1"/>
    <property type="match status" value="1"/>
</dbReference>
<dbReference type="Pfam" id="PF01599">
    <property type="entry name" value="Ribosomal_S27"/>
    <property type="match status" value="1"/>
</dbReference>
<dbReference type="SMART" id="SM01402">
    <property type="entry name" value="Ribosomal_S27"/>
    <property type="match status" value="1"/>
</dbReference>
<dbReference type="SUPFAM" id="SSF57829">
    <property type="entry name" value="Zn-binding ribosomal proteins"/>
    <property type="match status" value="1"/>
</dbReference>
<feature type="chain" id="PRO_0000137705" description="Small ribosomal subunit protein eS31">
    <location>
        <begin position="1"/>
        <end position="57"/>
    </location>
</feature>
<feature type="zinc finger region" description="C4-type" evidence="1">
    <location>
        <begin position="29"/>
        <end position="50"/>
    </location>
</feature>
<feature type="binding site" evidence="1">
    <location>
        <position position="29"/>
    </location>
    <ligand>
        <name>Zn(2+)</name>
        <dbReference type="ChEBI" id="CHEBI:29105"/>
    </ligand>
</feature>
<feature type="binding site" evidence="1">
    <location>
        <position position="32"/>
    </location>
    <ligand>
        <name>Zn(2+)</name>
        <dbReference type="ChEBI" id="CHEBI:29105"/>
    </ligand>
</feature>
<feature type="binding site" evidence="1">
    <location>
        <position position="47"/>
    </location>
    <ligand>
        <name>Zn(2+)</name>
        <dbReference type="ChEBI" id="CHEBI:29105"/>
    </ligand>
</feature>
<feature type="binding site" evidence="1">
    <location>
        <position position="50"/>
    </location>
    <ligand>
        <name>Zn(2+)</name>
        <dbReference type="ChEBI" id="CHEBI:29105"/>
    </ligand>
</feature>
<gene>
    <name evidence="1" type="primary">rps27ae</name>
    <name type="ordered locus">TK1695</name>
</gene>